<keyword id="KW-0067">ATP-binding</keyword>
<keyword id="KW-0170">Cobalt</keyword>
<keyword id="KW-0963">Cytoplasm</keyword>
<keyword id="KW-0460">Magnesium</keyword>
<keyword id="KW-0479">Metal-binding</keyword>
<keyword id="KW-0547">Nucleotide-binding</keyword>
<keyword id="KW-0554">One-carbon metabolism</keyword>
<keyword id="KW-0630">Potassium</keyword>
<keyword id="KW-1185">Reference proteome</keyword>
<keyword id="KW-0808">Transferase</keyword>
<organism>
    <name type="scientific">Nicotiana tabacum</name>
    <name type="common">Common tobacco</name>
    <dbReference type="NCBI Taxonomy" id="4097"/>
    <lineage>
        <taxon>Eukaryota</taxon>
        <taxon>Viridiplantae</taxon>
        <taxon>Streptophyta</taxon>
        <taxon>Embryophyta</taxon>
        <taxon>Tracheophyta</taxon>
        <taxon>Spermatophyta</taxon>
        <taxon>Magnoliopsida</taxon>
        <taxon>eudicotyledons</taxon>
        <taxon>Gunneridae</taxon>
        <taxon>Pentapetalae</taxon>
        <taxon>asterids</taxon>
        <taxon>lamiids</taxon>
        <taxon>Solanales</taxon>
        <taxon>Solanaceae</taxon>
        <taxon>Nicotianoideae</taxon>
        <taxon>Nicotianeae</taxon>
        <taxon>Nicotiana</taxon>
    </lineage>
</organism>
<reference key="1">
    <citation type="submission" date="1999-02" db="EMBL/GenBank/DDBJ databases">
        <title>Cloning and Characterization of a cDNA Encoding S-Adenosyl-L-Methionine Synthetase, an enzyme involved in Polyamine Biosynthesis in Nicotiana tabacum L.</title>
        <authorList>
            <person name="Wang J."/>
            <person name="Timko M.P."/>
        </authorList>
    </citation>
    <scope>NUCLEOTIDE SEQUENCE [MRNA]</scope>
    <source>
        <strain>cv. Burley 21</strain>
        <tissue>Root</tissue>
    </source>
</reference>
<evidence type="ECO:0000250" key="1"/>
<evidence type="ECO:0000250" key="2">
    <source>
        <dbReference type="UniProtKB" id="P0A817"/>
    </source>
</evidence>
<evidence type="ECO:0000250" key="3">
    <source>
        <dbReference type="UniProtKB" id="P13444"/>
    </source>
</evidence>
<evidence type="ECO:0000250" key="4">
    <source>
        <dbReference type="UniProtKB" id="Q00266"/>
    </source>
</evidence>
<evidence type="ECO:0000250" key="5">
    <source>
        <dbReference type="UniProtKB" id="Q96551"/>
    </source>
</evidence>
<evidence type="ECO:0000305" key="6"/>
<dbReference type="EC" id="2.5.1.6" evidence="5"/>
<dbReference type="EMBL" id="AF127243">
    <property type="protein sequence ID" value="AAF42974.1"/>
    <property type="molecule type" value="mRNA"/>
</dbReference>
<dbReference type="RefSeq" id="NP_001312332.1">
    <property type="nucleotide sequence ID" value="NM_001325403.1"/>
</dbReference>
<dbReference type="SMR" id="Q9M7K8"/>
<dbReference type="STRING" id="4097.Q9M7K8"/>
<dbReference type="PaxDb" id="4097-Q9M7K8"/>
<dbReference type="ProMEX" id="Q9M7K8"/>
<dbReference type="GeneID" id="107785513"/>
<dbReference type="KEGG" id="nta:107785513"/>
<dbReference type="OrthoDB" id="5852090at2759"/>
<dbReference type="UniPathway" id="UPA00315">
    <property type="reaction ID" value="UER00080"/>
</dbReference>
<dbReference type="Proteomes" id="UP000084051">
    <property type="component" value="Unplaced"/>
</dbReference>
<dbReference type="GO" id="GO:0005829">
    <property type="term" value="C:cytosol"/>
    <property type="evidence" value="ECO:0000318"/>
    <property type="project" value="GO_Central"/>
</dbReference>
<dbReference type="GO" id="GO:0005524">
    <property type="term" value="F:ATP binding"/>
    <property type="evidence" value="ECO:0007669"/>
    <property type="project" value="UniProtKB-KW"/>
</dbReference>
<dbReference type="GO" id="GO:0046872">
    <property type="term" value="F:metal ion binding"/>
    <property type="evidence" value="ECO:0007669"/>
    <property type="project" value="UniProtKB-KW"/>
</dbReference>
<dbReference type="GO" id="GO:0004478">
    <property type="term" value="F:methionine adenosyltransferase activity"/>
    <property type="evidence" value="ECO:0000318"/>
    <property type="project" value="GO_Central"/>
</dbReference>
<dbReference type="GO" id="GO:0006730">
    <property type="term" value="P:one-carbon metabolic process"/>
    <property type="evidence" value="ECO:0007669"/>
    <property type="project" value="UniProtKB-KW"/>
</dbReference>
<dbReference type="GO" id="GO:0006556">
    <property type="term" value="P:S-adenosylmethionine biosynthetic process"/>
    <property type="evidence" value="ECO:0000318"/>
    <property type="project" value="GO_Central"/>
</dbReference>
<dbReference type="CDD" id="cd18079">
    <property type="entry name" value="S-AdoMet_synt"/>
    <property type="match status" value="1"/>
</dbReference>
<dbReference type="FunFam" id="3.30.300.10:FF:000001">
    <property type="entry name" value="S-adenosylmethionine synthase"/>
    <property type="match status" value="1"/>
</dbReference>
<dbReference type="FunFam" id="3.30.300.10:FF:000003">
    <property type="entry name" value="S-adenosylmethionine synthase"/>
    <property type="match status" value="1"/>
</dbReference>
<dbReference type="FunFam" id="3.30.300.10:FF:000004">
    <property type="entry name" value="S-adenosylmethionine synthase"/>
    <property type="match status" value="1"/>
</dbReference>
<dbReference type="Gene3D" id="3.30.300.10">
    <property type="match status" value="3"/>
</dbReference>
<dbReference type="HAMAP" id="MF_00086">
    <property type="entry name" value="S_AdoMet_synth1"/>
    <property type="match status" value="1"/>
</dbReference>
<dbReference type="InterPro" id="IPR022631">
    <property type="entry name" value="ADOMET_SYNTHASE_CS"/>
</dbReference>
<dbReference type="InterPro" id="IPR022630">
    <property type="entry name" value="S-AdoMet_synt_C"/>
</dbReference>
<dbReference type="InterPro" id="IPR022629">
    <property type="entry name" value="S-AdoMet_synt_central"/>
</dbReference>
<dbReference type="InterPro" id="IPR022628">
    <property type="entry name" value="S-AdoMet_synt_N"/>
</dbReference>
<dbReference type="InterPro" id="IPR002133">
    <property type="entry name" value="S-AdoMet_synthetase"/>
</dbReference>
<dbReference type="InterPro" id="IPR022636">
    <property type="entry name" value="S-AdoMet_synthetase_sfam"/>
</dbReference>
<dbReference type="NCBIfam" id="TIGR01034">
    <property type="entry name" value="metK"/>
    <property type="match status" value="1"/>
</dbReference>
<dbReference type="PANTHER" id="PTHR11964">
    <property type="entry name" value="S-ADENOSYLMETHIONINE SYNTHETASE"/>
    <property type="match status" value="1"/>
</dbReference>
<dbReference type="Pfam" id="PF02773">
    <property type="entry name" value="S-AdoMet_synt_C"/>
    <property type="match status" value="1"/>
</dbReference>
<dbReference type="Pfam" id="PF02772">
    <property type="entry name" value="S-AdoMet_synt_M"/>
    <property type="match status" value="1"/>
</dbReference>
<dbReference type="Pfam" id="PF00438">
    <property type="entry name" value="S-AdoMet_synt_N"/>
    <property type="match status" value="1"/>
</dbReference>
<dbReference type="PIRSF" id="PIRSF000497">
    <property type="entry name" value="MAT"/>
    <property type="match status" value="1"/>
</dbReference>
<dbReference type="SUPFAM" id="SSF55973">
    <property type="entry name" value="S-adenosylmethionine synthetase"/>
    <property type="match status" value="3"/>
</dbReference>
<dbReference type="PROSITE" id="PS00376">
    <property type="entry name" value="ADOMET_SYNTHASE_1"/>
    <property type="match status" value="1"/>
</dbReference>
<dbReference type="PROSITE" id="PS00377">
    <property type="entry name" value="ADOMET_SYNTHASE_2"/>
    <property type="match status" value="1"/>
</dbReference>
<feature type="chain" id="PRO_0000363051" description="S-adenosylmethionine synthase 1">
    <location>
        <begin position="1"/>
        <end position="390"/>
    </location>
</feature>
<feature type="binding site" evidence="3">
    <location>
        <position position="9"/>
    </location>
    <ligand>
        <name>Mg(2+)</name>
        <dbReference type="ChEBI" id="CHEBI:18420"/>
    </ligand>
</feature>
<feature type="binding site" description="in other chain" evidence="4">
    <location>
        <position position="15"/>
    </location>
    <ligand>
        <name>ATP</name>
        <dbReference type="ChEBI" id="CHEBI:30616"/>
        <note>ligand shared between two neighboring subunits</note>
    </ligand>
</feature>
<feature type="binding site" evidence="2">
    <location>
        <position position="43"/>
    </location>
    <ligand>
        <name>K(+)</name>
        <dbReference type="ChEBI" id="CHEBI:29103"/>
    </ligand>
</feature>
<feature type="binding site" description="in other chain" evidence="2">
    <location>
        <position position="56"/>
    </location>
    <ligand>
        <name>L-methionine</name>
        <dbReference type="ChEBI" id="CHEBI:57844"/>
        <note>ligand shared between two neighboring subunits</note>
    </ligand>
</feature>
<feature type="binding site" description="in other chain" evidence="2">
    <location>
        <position position="99"/>
    </location>
    <ligand>
        <name>L-methionine</name>
        <dbReference type="ChEBI" id="CHEBI:57844"/>
        <note>ligand shared between two neighboring subunits</note>
    </ligand>
</feature>
<feature type="binding site" description="in other chain" evidence="4">
    <location>
        <begin position="167"/>
        <end position="169"/>
    </location>
    <ligand>
        <name>ATP</name>
        <dbReference type="ChEBI" id="CHEBI:30616"/>
        <note>ligand shared between two neighboring subunits</note>
    </ligand>
</feature>
<feature type="binding site" description="in other chain" evidence="4">
    <location>
        <begin position="235"/>
        <end position="238"/>
    </location>
    <ligand>
        <name>ATP</name>
        <dbReference type="ChEBI" id="CHEBI:30616"/>
        <note>ligand shared between two neighboring subunits</note>
    </ligand>
</feature>
<feature type="binding site" description="in other chain" evidence="4">
    <location>
        <position position="246"/>
    </location>
    <ligand>
        <name>ATP</name>
        <dbReference type="ChEBI" id="CHEBI:30616"/>
        <note>ligand shared between two neighboring subunits</note>
    </ligand>
</feature>
<feature type="binding site" evidence="2">
    <location>
        <position position="246"/>
    </location>
    <ligand>
        <name>L-methionine</name>
        <dbReference type="ChEBI" id="CHEBI:57844"/>
        <note>ligand shared between two neighboring subunits</note>
    </ligand>
</feature>
<feature type="binding site" description="in other chain" evidence="2">
    <location>
        <begin position="252"/>
        <end position="253"/>
    </location>
    <ligand>
        <name>ATP</name>
        <dbReference type="ChEBI" id="CHEBI:30616"/>
        <note>ligand shared between two neighboring subunits</note>
    </ligand>
</feature>
<feature type="binding site" evidence="2">
    <location>
        <position position="269"/>
    </location>
    <ligand>
        <name>ATP</name>
        <dbReference type="ChEBI" id="CHEBI:30616"/>
        <note>ligand shared between two neighboring subunits</note>
    </ligand>
</feature>
<feature type="binding site" evidence="2">
    <location>
        <position position="273"/>
    </location>
    <ligand>
        <name>ATP</name>
        <dbReference type="ChEBI" id="CHEBI:30616"/>
        <note>ligand shared between two neighboring subunits</note>
    </ligand>
</feature>
<feature type="binding site" evidence="3">
    <location>
        <position position="277"/>
    </location>
    <ligand>
        <name>ATP</name>
        <dbReference type="ChEBI" id="CHEBI:30616"/>
        <note>ligand shared between two neighboring subunits</note>
    </ligand>
</feature>
<feature type="binding site" description="in other chain" evidence="2">
    <location>
        <position position="277"/>
    </location>
    <ligand>
        <name>L-methionine</name>
        <dbReference type="ChEBI" id="CHEBI:57844"/>
        <note>ligand shared between two neighboring subunits</note>
    </ligand>
</feature>
<comment type="function">
    <text evidence="5">Catalyzes the formation of S-adenosylmethionine from methionine and ATP. The reaction comprises two steps that are both catalyzed by the same enzyme: formation of S-adenosylmethionine (AdoMet) and triphosphate, and subsequent hydrolysis of the triphosphate.</text>
</comment>
<comment type="catalytic activity">
    <reaction evidence="5">
        <text>L-methionine + ATP + H2O = S-adenosyl-L-methionine + phosphate + diphosphate</text>
        <dbReference type="Rhea" id="RHEA:21080"/>
        <dbReference type="ChEBI" id="CHEBI:15377"/>
        <dbReference type="ChEBI" id="CHEBI:30616"/>
        <dbReference type="ChEBI" id="CHEBI:33019"/>
        <dbReference type="ChEBI" id="CHEBI:43474"/>
        <dbReference type="ChEBI" id="CHEBI:57844"/>
        <dbReference type="ChEBI" id="CHEBI:59789"/>
        <dbReference type="EC" id="2.5.1.6"/>
    </reaction>
</comment>
<comment type="cofactor">
    <cofactor evidence="5">
        <name>Mn(2+)</name>
        <dbReference type="ChEBI" id="CHEBI:29035"/>
    </cofactor>
    <cofactor evidence="5">
        <name>Mg(2+)</name>
        <dbReference type="ChEBI" id="CHEBI:18420"/>
    </cofactor>
    <cofactor evidence="5">
        <name>Co(2+)</name>
        <dbReference type="ChEBI" id="CHEBI:48828"/>
    </cofactor>
    <text evidence="3 5">Binds 2 divalent ions per subunit. The metal ions interact primarily with the substrate (By similarity). Can utilize magnesium, manganese or cobalt (in vitro) (By similarity).</text>
</comment>
<comment type="cofactor">
    <cofactor evidence="5">
        <name>K(+)</name>
        <dbReference type="ChEBI" id="CHEBI:29103"/>
    </cofactor>
    <text evidence="3">Binds 1 potassium ion per subunit. The potassium ion interacts primarily with the substrate (By similarity).</text>
</comment>
<comment type="pathway">
    <text evidence="5">Amino-acid biosynthesis; S-adenosyl-L-methionine biosynthesis; S-adenosyl-L-methionine from L-methionine: step 1/1.</text>
</comment>
<comment type="subunit">
    <text evidence="1">Homotetramer.</text>
</comment>
<comment type="subcellular location">
    <subcellularLocation>
        <location evidence="1">Cytoplasm</location>
    </subcellularLocation>
</comment>
<comment type="similarity">
    <text evidence="6">Belongs to the AdoMet synthase family.</text>
</comment>
<name>METK1_TOBAC</name>
<protein>
    <recommendedName>
        <fullName>S-adenosylmethionine synthase 1</fullName>
        <shortName>AdoMet synthase 1</shortName>
        <ecNumber evidence="5">2.5.1.6</ecNumber>
    </recommendedName>
    <alternativeName>
        <fullName>Methionine adenosyltransferase 1</fullName>
        <shortName>MAT 1</shortName>
    </alternativeName>
</protein>
<proteinExistence type="evidence at transcript level"/>
<sequence length="390" mass="42715">METFLFTSESVNEGHPDKLCDQVSDAILDACLEQDPESKVACETCTKTNMVMVFGEITTKATVDYEKIVRDTCRGIGFTSADVGLDADNCKVLVNIEQQSPDIAQGVHGHLTKKPEEIGAGDQGHMFGYATDETPELMPLTHVWATKLGAKLTEVRKNKTCPWLRPDGKTQVTVEYKNDNGAMVPIRVHTVLISTQHDETVTNDQIAQDLKEHVIKPVIPSQYLDENTIFHLNPSGRFVIGGPHGDAGLTGRKIIIDTYGGWGAHGGGAFSGKDPTKVDRSGAYIVRQAAKSVVASGLARRCIVQVSYAIGVAEPLSVFVDTYKTGTIPDKDILTLIKENFDFRPGMMSINLDLLRGGNFRYQKTAAYGHFGRDDPDFSWETVKVLKPKA</sequence>
<accession>Q9M7K8</accession>
<gene>
    <name type="primary">SAMS1</name>
</gene>